<comment type="function">
    <text evidence="1">Transfers the 4'-phosphopantetheine moiety from coenzyme A to a Ser of acyl-carrier-protein.</text>
</comment>
<comment type="catalytic activity">
    <reaction evidence="1">
        <text>apo-[ACP] + CoA = holo-[ACP] + adenosine 3',5'-bisphosphate + H(+)</text>
        <dbReference type="Rhea" id="RHEA:12068"/>
        <dbReference type="Rhea" id="RHEA-COMP:9685"/>
        <dbReference type="Rhea" id="RHEA-COMP:9690"/>
        <dbReference type="ChEBI" id="CHEBI:15378"/>
        <dbReference type="ChEBI" id="CHEBI:29999"/>
        <dbReference type="ChEBI" id="CHEBI:57287"/>
        <dbReference type="ChEBI" id="CHEBI:58343"/>
        <dbReference type="ChEBI" id="CHEBI:64479"/>
        <dbReference type="EC" id="2.7.8.7"/>
    </reaction>
</comment>
<comment type="cofactor">
    <cofactor evidence="1">
        <name>Mg(2+)</name>
        <dbReference type="ChEBI" id="CHEBI:18420"/>
    </cofactor>
</comment>
<comment type="subcellular location">
    <subcellularLocation>
        <location evidence="1">Cytoplasm</location>
    </subcellularLocation>
</comment>
<comment type="similarity">
    <text evidence="1">Belongs to the P-Pant transferase superfamily. AcpS family.</text>
</comment>
<dbReference type="EC" id="2.7.8.7" evidence="1"/>
<dbReference type="EMBL" id="CP001661">
    <property type="protein sequence ID" value="ACT19052.1"/>
    <property type="molecule type" value="Genomic_DNA"/>
</dbReference>
<dbReference type="SMR" id="C6E2U2"/>
<dbReference type="STRING" id="443144.GM21_3023"/>
<dbReference type="KEGG" id="gem:GM21_3023"/>
<dbReference type="eggNOG" id="COG0736">
    <property type="taxonomic scope" value="Bacteria"/>
</dbReference>
<dbReference type="HOGENOM" id="CLU_089696_3_1_7"/>
<dbReference type="OrthoDB" id="517356at2"/>
<dbReference type="GO" id="GO:0005737">
    <property type="term" value="C:cytoplasm"/>
    <property type="evidence" value="ECO:0007669"/>
    <property type="project" value="UniProtKB-SubCell"/>
</dbReference>
<dbReference type="GO" id="GO:0008897">
    <property type="term" value="F:holo-[acyl-carrier-protein] synthase activity"/>
    <property type="evidence" value="ECO:0007669"/>
    <property type="project" value="UniProtKB-UniRule"/>
</dbReference>
<dbReference type="GO" id="GO:0000287">
    <property type="term" value="F:magnesium ion binding"/>
    <property type="evidence" value="ECO:0007669"/>
    <property type="project" value="UniProtKB-UniRule"/>
</dbReference>
<dbReference type="GO" id="GO:0006633">
    <property type="term" value="P:fatty acid biosynthetic process"/>
    <property type="evidence" value="ECO:0007669"/>
    <property type="project" value="UniProtKB-UniRule"/>
</dbReference>
<dbReference type="Gene3D" id="3.90.470.20">
    <property type="entry name" value="4'-phosphopantetheinyl transferase domain"/>
    <property type="match status" value="1"/>
</dbReference>
<dbReference type="HAMAP" id="MF_00101">
    <property type="entry name" value="AcpS"/>
    <property type="match status" value="1"/>
</dbReference>
<dbReference type="InterPro" id="IPR008278">
    <property type="entry name" value="4-PPantetheinyl_Trfase_dom"/>
</dbReference>
<dbReference type="InterPro" id="IPR037143">
    <property type="entry name" value="4-PPantetheinyl_Trfase_dom_sf"/>
</dbReference>
<dbReference type="InterPro" id="IPR002582">
    <property type="entry name" value="ACPS"/>
</dbReference>
<dbReference type="InterPro" id="IPR004568">
    <property type="entry name" value="Ppantetheine-prot_Trfase_dom"/>
</dbReference>
<dbReference type="NCBIfam" id="TIGR00516">
    <property type="entry name" value="acpS"/>
    <property type="match status" value="1"/>
</dbReference>
<dbReference type="NCBIfam" id="TIGR00556">
    <property type="entry name" value="pantethn_trn"/>
    <property type="match status" value="1"/>
</dbReference>
<dbReference type="NCBIfam" id="NF000832">
    <property type="entry name" value="PRK00070.3-2"/>
    <property type="match status" value="1"/>
</dbReference>
<dbReference type="NCBIfam" id="NF011250">
    <property type="entry name" value="PRK14656.1"/>
    <property type="match status" value="1"/>
</dbReference>
<dbReference type="Pfam" id="PF01648">
    <property type="entry name" value="ACPS"/>
    <property type="match status" value="1"/>
</dbReference>
<dbReference type="SUPFAM" id="SSF56214">
    <property type="entry name" value="4'-phosphopantetheinyl transferase"/>
    <property type="match status" value="1"/>
</dbReference>
<gene>
    <name evidence="1" type="primary">acpS</name>
    <name type="ordered locus">GM21_3023</name>
</gene>
<name>ACPS_GEOSM</name>
<protein>
    <recommendedName>
        <fullName evidence="1">Holo-[acyl-carrier-protein] synthase</fullName>
        <shortName evidence="1">Holo-ACP synthase</shortName>
        <ecNumber evidence="1">2.7.8.7</ecNumber>
    </recommendedName>
    <alternativeName>
        <fullName evidence="1">4'-phosphopantetheinyl transferase AcpS</fullName>
    </alternativeName>
</protein>
<feature type="chain" id="PRO_1000202796" description="Holo-[acyl-carrier-protein] synthase">
    <location>
        <begin position="1"/>
        <end position="125"/>
    </location>
</feature>
<feature type="binding site" evidence="1">
    <location>
        <position position="8"/>
    </location>
    <ligand>
        <name>Mg(2+)</name>
        <dbReference type="ChEBI" id="CHEBI:18420"/>
    </ligand>
</feature>
<feature type="binding site" evidence="1">
    <location>
        <position position="57"/>
    </location>
    <ligand>
        <name>Mg(2+)</name>
        <dbReference type="ChEBI" id="CHEBI:18420"/>
    </ligand>
</feature>
<accession>C6E2U2</accession>
<evidence type="ECO:0000255" key="1">
    <source>
        <dbReference type="HAMAP-Rule" id="MF_00101"/>
    </source>
</evidence>
<keyword id="KW-0963">Cytoplasm</keyword>
<keyword id="KW-0275">Fatty acid biosynthesis</keyword>
<keyword id="KW-0276">Fatty acid metabolism</keyword>
<keyword id="KW-0444">Lipid biosynthesis</keyword>
<keyword id="KW-0443">Lipid metabolism</keyword>
<keyword id="KW-0460">Magnesium</keyword>
<keyword id="KW-0479">Metal-binding</keyword>
<keyword id="KW-0808">Transferase</keyword>
<organism>
    <name type="scientific">Geobacter sp. (strain M21)</name>
    <dbReference type="NCBI Taxonomy" id="443144"/>
    <lineage>
        <taxon>Bacteria</taxon>
        <taxon>Pseudomonadati</taxon>
        <taxon>Thermodesulfobacteriota</taxon>
        <taxon>Desulfuromonadia</taxon>
        <taxon>Geobacterales</taxon>
        <taxon>Geobacteraceae</taxon>
        <taxon>Geobacter</taxon>
    </lineage>
</organism>
<proteinExistence type="inferred from homology"/>
<reference key="1">
    <citation type="submission" date="2009-07" db="EMBL/GenBank/DDBJ databases">
        <title>Complete sequence of Geobacter sp. M21.</title>
        <authorList>
            <consortium name="US DOE Joint Genome Institute"/>
            <person name="Lucas S."/>
            <person name="Copeland A."/>
            <person name="Lapidus A."/>
            <person name="Glavina del Rio T."/>
            <person name="Dalin E."/>
            <person name="Tice H."/>
            <person name="Bruce D."/>
            <person name="Goodwin L."/>
            <person name="Pitluck S."/>
            <person name="Saunders E."/>
            <person name="Brettin T."/>
            <person name="Detter J.C."/>
            <person name="Han C."/>
            <person name="Larimer F."/>
            <person name="Land M."/>
            <person name="Hauser L."/>
            <person name="Kyrpides N."/>
            <person name="Ovchinnikova G."/>
            <person name="Lovley D."/>
        </authorList>
    </citation>
    <scope>NUCLEOTIDE SEQUENCE [LARGE SCALE GENOMIC DNA]</scope>
    <source>
        <strain>M21</strain>
    </source>
</reference>
<sequence length="125" mass="14035">MIYGTGVDIVEIARFEKFLQQGNDALFDRIFTPSEIEYCSSKKHSAQHYALRFAAKESFLKALGTGLRDGISWKDMEVVNDQLGKPELKLYRRAEELFRQAGLGACFLSLSHDAGCAVAMVVLER</sequence>